<keyword id="KW-0472">Membrane</keyword>
<keyword id="KW-0520">NAD</keyword>
<keyword id="KW-0521">NADP</keyword>
<keyword id="KW-0618">Plastoquinone</keyword>
<keyword id="KW-0874">Quinone</keyword>
<keyword id="KW-1185">Reference proteome</keyword>
<keyword id="KW-0793">Thylakoid</keyword>
<keyword id="KW-1278">Translocase</keyword>
<keyword id="KW-0812">Transmembrane</keyword>
<keyword id="KW-1133">Transmembrane helix</keyword>
<protein>
    <recommendedName>
        <fullName evidence="1">NAD(P)H-quinone oxidoreductase chain 4</fullName>
        <ecNumber evidence="1">7.1.1.-</ecNumber>
    </recommendedName>
    <alternativeName>
        <fullName evidence="1">NAD(P)H dehydrogenase I, chain 4</fullName>
    </alternativeName>
    <alternativeName>
        <fullName evidence="1">NDH-1, chain 4</fullName>
    </alternativeName>
</protein>
<organism>
    <name type="scientific">Prochlorococcus marinus (strain MIT 9211)</name>
    <dbReference type="NCBI Taxonomy" id="93059"/>
    <lineage>
        <taxon>Bacteria</taxon>
        <taxon>Bacillati</taxon>
        <taxon>Cyanobacteriota</taxon>
        <taxon>Cyanophyceae</taxon>
        <taxon>Synechococcales</taxon>
        <taxon>Prochlorococcaceae</taxon>
        <taxon>Prochlorococcus</taxon>
    </lineage>
</organism>
<proteinExistence type="inferred from homology"/>
<feature type="chain" id="PRO_1000126231" description="NAD(P)H-quinone oxidoreductase chain 4">
    <location>
        <begin position="1"/>
        <end position="558"/>
    </location>
</feature>
<feature type="transmembrane region" description="Helical" evidence="1">
    <location>
        <begin position="25"/>
        <end position="45"/>
    </location>
</feature>
<feature type="transmembrane region" description="Helical" evidence="1">
    <location>
        <begin position="56"/>
        <end position="76"/>
    </location>
</feature>
<feature type="transmembrane region" description="Helical" evidence="1">
    <location>
        <begin position="111"/>
        <end position="131"/>
    </location>
</feature>
<feature type="transmembrane region" description="Helical" evidence="1">
    <location>
        <begin position="133"/>
        <end position="153"/>
    </location>
</feature>
<feature type="transmembrane region" description="Helical" evidence="1">
    <location>
        <begin position="157"/>
        <end position="177"/>
    </location>
</feature>
<feature type="transmembrane region" description="Helical" evidence="1">
    <location>
        <begin position="189"/>
        <end position="209"/>
    </location>
</feature>
<feature type="transmembrane region" description="Helical" evidence="1">
    <location>
        <begin position="230"/>
        <end position="250"/>
    </location>
</feature>
<feature type="transmembrane region" description="Helical" evidence="1">
    <location>
        <begin position="264"/>
        <end position="284"/>
    </location>
</feature>
<feature type="transmembrane region" description="Helical" evidence="1">
    <location>
        <begin position="298"/>
        <end position="318"/>
    </location>
</feature>
<feature type="transmembrane region" description="Helical" evidence="1">
    <location>
        <begin position="327"/>
        <end position="347"/>
    </location>
</feature>
<feature type="transmembrane region" description="Helical" evidence="1">
    <location>
        <begin position="353"/>
        <end position="373"/>
    </location>
</feature>
<feature type="transmembrane region" description="Helical" evidence="1">
    <location>
        <begin position="395"/>
        <end position="417"/>
    </location>
</feature>
<feature type="transmembrane region" description="Helical" evidence="1">
    <location>
        <begin position="438"/>
        <end position="458"/>
    </location>
</feature>
<feature type="transmembrane region" description="Helical" evidence="1">
    <location>
        <begin position="485"/>
        <end position="505"/>
    </location>
</feature>
<evidence type="ECO:0000255" key="1">
    <source>
        <dbReference type="HAMAP-Rule" id="MF_00491"/>
    </source>
</evidence>
<comment type="function">
    <text evidence="1">NDH-1 shuttles electrons from NAD(P)H, via FMN and iron-sulfur (Fe-S) centers, to quinones in the respiratory chain. The immediate electron acceptor for the enzyme in this species is believed to be plastoquinone. Couples the redox reaction to proton translocation (for every two electrons transferred, four hydrogen ions are translocated across the cytoplasmic membrane), and thus conserves the redox energy in a proton gradient.</text>
</comment>
<comment type="catalytic activity">
    <reaction evidence="1">
        <text>a plastoquinone + NADH + (n+1) H(+)(in) = a plastoquinol + NAD(+) + n H(+)(out)</text>
        <dbReference type="Rhea" id="RHEA:42608"/>
        <dbReference type="Rhea" id="RHEA-COMP:9561"/>
        <dbReference type="Rhea" id="RHEA-COMP:9562"/>
        <dbReference type="ChEBI" id="CHEBI:15378"/>
        <dbReference type="ChEBI" id="CHEBI:17757"/>
        <dbReference type="ChEBI" id="CHEBI:57540"/>
        <dbReference type="ChEBI" id="CHEBI:57945"/>
        <dbReference type="ChEBI" id="CHEBI:62192"/>
    </reaction>
</comment>
<comment type="catalytic activity">
    <reaction evidence="1">
        <text>a plastoquinone + NADPH + (n+1) H(+)(in) = a plastoquinol + NADP(+) + n H(+)(out)</text>
        <dbReference type="Rhea" id="RHEA:42612"/>
        <dbReference type="Rhea" id="RHEA-COMP:9561"/>
        <dbReference type="Rhea" id="RHEA-COMP:9562"/>
        <dbReference type="ChEBI" id="CHEBI:15378"/>
        <dbReference type="ChEBI" id="CHEBI:17757"/>
        <dbReference type="ChEBI" id="CHEBI:57783"/>
        <dbReference type="ChEBI" id="CHEBI:58349"/>
        <dbReference type="ChEBI" id="CHEBI:62192"/>
    </reaction>
</comment>
<comment type="subcellular location">
    <subcellularLocation>
        <location evidence="1">Cellular thylakoid membrane</location>
        <topology evidence="1">Multi-pass membrane protein</topology>
    </subcellularLocation>
</comment>
<comment type="similarity">
    <text evidence="1">Belongs to the complex I subunit 4 family.</text>
</comment>
<gene>
    <name evidence="1" type="primary">ndhD</name>
    <name type="ordered locus">P9211_01651</name>
</gene>
<dbReference type="EC" id="7.1.1.-" evidence="1"/>
<dbReference type="EMBL" id="CP000878">
    <property type="protein sequence ID" value="ABX08096.1"/>
    <property type="molecule type" value="Genomic_DNA"/>
</dbReference>
<dbReference type="SMR" id="A9BD08"/>
<dbReference type="STRING" id="93059.P9211_01651"/>
<dbReference type="KEGG" id="pmj:P9211_01651"/>
<dbReference type="eggNOG" id="COG1008">
    <property type="taxonomic scope" value="Bacteria"/>
</dbReference>
<dbReference type="HOGENOM" id="CLU_007100_4_0_3"/>
<dbReference type="OrthoDB" id="9811718at2"/>
<dbReference type="Proteomes" id="UP000000788">
    <property type="component" value="Chromosome"/>
</dbReference>
<dbReference type="GO" id="GO:0031676">
    <property type="term" value="C:plasma membrane-derived thylakoid membrane"/>
    <property type="evidence" value="ECO:0007669"/>
    <property type="project" value="UniProtKB-SubCell"/>
</dbReference>
<dbReference type="GO" id="GO:0008137">
    <property type="term" value="F:NADH dehydrogenase (ubiquinone) activity"/>
    <property type="evidence" value="ECO:0007669"/>
    <property type="project" value="InterPro"/>
</dbReference>
<dbReference type="GO" id="GO:0048039">
    <property type="term" value="F:ubiquinone binding"/>
    <property type="evidence" value="ECO:0007669"/>
    <property type="project" value="TreeGrafter"/>
</dbReference>
<dbReference type="GO" id="GO:0042773">
    <property type="term" value="P:ATP synthesis coupled electron transport"/>
    <property type="evidence" value="ECO:0007669"/>
    <property type="project" value="InterPro"/>
</dbReference>
<dbReference type="GO" id="GO:0015990">
    <property type="term" value="P:electron transport coupled proton transport"/>
    <property type="evidence" value="ECO:0007669"/>
    <property type="project" value="TreeGrafter"/>
</dbReference>
<dbReference type="HAMAP" id="MF_00491">
    <property type="entry name" value="NDH1_NuoM"/>
    <property type="match status" value="1"/>
</dbReference>
<dbReference type="InterPro" id="IPR022997">
    <property type="entry name" value="NADH_Q_OxRdtase_chain4"/>
</dbReference>
<dbReference type="InterPro" id="IPR010227">
    <property type="entry name" value="NADH_Q_OxRdtase_chainM/4"/>
</dbReference>
<dbReference type="InterPro" id="IPR003918">
    <property type="entry name" value="NADH_UbQ_OxRdtase"/>
</dbReference>
<dbReference type="InterPro" id="IPR001750">
    <property type="entry name" value="ND/Mrp_TM"/>
</dbReference>
<dbReference type="NCBIfam" id="TIGR01972">
    <property type="entry name" value="NDH_I_M"/>
    <property type="match status" value="1"/>
</dbReference>
<dbReference type="NCBIfam" id="NF002713">
    <property type="entry name" value="PRK02546.1"/>
    <property type="match status" value="1"/>
</dbReference>
<dbReference type="NCBIfam" id="NF009212">
    <property type="entry name" value="PRK12561.1"/>
    <property type="match status" value="1"/>
</dbReference>
<dbReference type="PANTHER" id="PTHR43507:SF21">
    <property type="entry name" value="NAD(P)H-QUINONE OXIDOREDUCTASE CHAIN 4, CHLOROPLASTIC"/>
    <property type="match status" value="1"/>
</dbReference>
<dbReference type="PANTHER" id="PTHR43507">
    <property type="entry name" value="NADH-UBIQUINONE OXIDOREDUCTASE CHAIN 4"/>
    <property type="match status" value="1"/>
</dbReference>
<dbReference type="Pfam" id="PF00361">
    <property type="entry name" value="Proton_antipo_M"/>
    <property type="match status" value="1"/>
</dbReference>
<dbReference type="PRINTS" id="PR01437">
    <property type="entry name" value="NUOXDRDTASE4"/>
</dbReference>
<sequence length="558" mass="60664">MFECTPISILATFSGTVPEPIEADFPWLSLSILFPIFGSLVVPFIPDKGDGKTVRWYALGIALVTFLITVGAYLKGYDPSQEGLQLAERVSWLPDLGLTWAVGADGLSMPLILLTSFITALAVLAAWPVSFKPKLFFFLILAMDGGQIAVFAVQDMLLFFLAWELELLPVYLLLAIWGGKKRQYAATKFIIYTAGSSLFILLAALAMGFFGGGTPNFEFTHLANQDFGTGFQLLCYGGLLIAFGVKLPVVPLHTWLPDAHGEATAPVHMLLAGILLKMGGYALLRFNAQLLPAAHAQFAPLLIVLGVVNIIYAALTSFAQRNLKRKIAYSSISHMGFVLIGIGSFSSLGTSGAMLQMVSHGLIGASLFFLVGATYDRTRTLQLNEMGGVGQKMRIMFALWTTCSLASLALPGMSGFVSELMVFTGFVTDEVYTLPFRIVIAGLAAIGVILTPIYLLSMLREIFFGKENVEFLSNRELVDAEPREIYVIGSLLVPIIGIGLYPRIMTETYIASIDGLVERDKIAIEQMLKPSETISSNKNLSLITSSTPSLTPYKVRKS</sequence>
<name>NU4C_PROM4</name>
<reference key="1">
    <citation type="journal article" date="2007" name="PLoS Genet.">
        <title>Patterns and implications of gene gain and loss in the evolution of Prochlorococcus.</title>
        <authorList>
            <person name="Kettler G.C."/>
            <person name="Martiny A.C."/>
            <person name="Huang K."/>
            <person name="Zucker J."/>
            <person name="Coleman M.L."/>
            <person name="Rodrigue S."/>
            <person name="Chen F."/>
            <person name="Lapidus A."/>
            <person name="Ferriera S."/>
            <person name="Johnson J."/>
            <person name="Steglich C."/>
            <person name="Church G.M."/>
            <person name="Richardson P."/>
            <person name="Chisholm S.W."/>
        </authorList>
    </citation>
    <scope>NUCLEOTIDE SEQUENCE [LARGE SCALE GENOMIC DNA]</scope>
    <source>
        <strain>MIT 9211</strain>
    </source>
</reference>
<accession>A9BD08</accession>